<accession>Q66L32</accession>
<gene>
    <name type="primary">timm8a</name>
    <name type="synonym">tim8a</name>
</gene>
<proteinExistence type="inferred from homology"/>
<sequence>MSDFDSNLDLAGTGASPAEAAELQRMLAVEQQKAQFTAQVHNFMDVCWDKCIDRPGNKLDSRTESCLVSCVDRFIDTTLSITNRFAQIVQKGAH</sequence>
<feature type="chain" id="PRO_0000228024" description="Mitochondrial import inner membrane translocase subunit Tim8 A">
    <location>
        <begin position="1"/>
        <end position="94"/>
    </location>
</feature>
<feature type="short sequence motif" description="Twin CX3C motif">
    <location>
        <begin position="47"/>
        <end position="70"/>
    </location>
</feature>
<feature type="disulfide bond" evidence="1">
    <location>
        <begin position="47"/>
        <end position="70"/>
    </location>
</feature>
<feature type="disulfide bond" evidence="1">
    <location>
        <begin position="51"/>
        <end position="66"/>
    </location>
</feature>
<keyword id="KW-0143">Chaperone</keyword>
<keyword id="KW-1015">Disulfide bond</keyword>
<keyword id="KW-0472">Membrane</keyword>
<keyword id="KW-0479">Metal-binding</keyword>
<keyword id="KW-0496">Mitochondrion</keyword>
<keyword id="KW-0999">Mitochondrion inner membrane</keyword>
<keyword id="KW-0653">Protein transport</keyword>
<keyword id="KW-1185">Reference proteome</keyword>
<keyword id="KW-0811">Translocation</keyword>
<keyword id="KW-0813">Transport</keyword>
<keyword id="KW-0862">Zinc</keyword>
<name>TIM8A_XENLA</name>
<reference key="1">
    <citation type="submission" date="2004-07" db="EMBL/GenBank/DDBJ databases">
        <authorList>
            <consortium name="NIH - Xenopus Gene Collection (XGC) project"/>
        </authorList>
    </citation>
    <scope>NUCLEOTIDE SEQUENCE [LARGE SCALE MRNA]</scope>
</reference>
<protein>
    <recommendedName>
        <fullName>Mitochondrial import inner membrane translocase subunit Tim8 A</fullName>
    </recommendedName>
</protein>
<dbReference type="EMBL" id="BC078465">
    <property type="protein sequence ID" value="AAH78465.1"/>
    <property type="molecule type" value="mRNA"/>
</dbReference>
<dbReference type="RefSeq" id="NP_001087186.1">
    <property type="nucleotide sequence ID" value="NM_001093717.1"/>
</dbReference>
<dbReference type="SMR" id="Q66L32"/>
<dbReference type="DNASU" id="447075"/>
<dbReference type="GeneID" id="447075"/>
<dbReference type="KEGG" id="xla:447075"/>
<dbReference type="AGR" id="Xenbase:XB-GENE-6254561"/>
<dbReference type="CTD" id="447075"/>
<dbReference type="Xenbase" id="XB-GENE-6254561">
    <property type="gene designation" value="timm8b.L"/>
</dbReference>
<dbReference type="OMA" id="NEICWDK"/>
<dbReference type="OrthoDB" id="344165at2759"/>
<dbReference type="Proteomes" id="UP000186698">
    <property type="component" value="Chromosome 7L"/>
</dbReference>
<dbReference type="Bgee" id="447075">
    <property type="expression patterns" value="Expressed in muscle tissue and 19 other cell types or tissues"/>
</dbReference>
<dbReference type="GO" id="GO:0005743">
    <property type="term" value="C:mitochondrial inner membrane"/>
    <property type="evidence" value="ECO:0007669"/>
    <property type="project" value="UniProtKB-SubCell"/>
</dbReference>
<dbReference type="GO" id="GO:0046872">
    <property type="term" value="F:metal ion binding"/>
    <property type="evidence" value="ECO:0007669"/>
    <property type="project" value="UniProtKB-KW"/>
</dbReference>
<dbReference type="GO" id="GO:0015031">
    <property type="term" value="P:protein transport"/>
    <property type="evidence" value="ECO:0007669"/>
    <property type="project" value="UniProtKB-KW"/>
</dbReference>
<dbReference type="Gene3D" id="1.10.287.810">
    <property type="entry name" value="Mitochondrial import inner membrane translocase subunit tim13 like domains"/>
    <property type="match status" value="1"/>
</dbReference>
<dbReference type="InterPro" id="IPR004217">
    <property type="entry name" value="Tim10-like"/>
</dbReference>
<dbReference type="InterPro" id="IPR035427">
    <property type="entry name" value="Tim10-like_dom_sf"/>
</dbReference>
<dbReference type="Pfam" id="PF02953">
    <property type="entry name" value="zf-Tim10_DDP"/>
    <property type="match status" value="1"/>
</dbReference>
<dbReference type="SUPFAM" id="SSF144122">
    <property type="entry name" value="Tim10-like"/>
    <property type="match status" value="1"/>
</dbReference>
<evidence type="ECO:0000250" key="1"/>
<evidence type="ECO:0000305" key="2"/>
<comment type="function">
    <text evidence="1">Mitochondrial intermembrane chaperone that participates in the import and insertion of some multi-pass transmembrane proteins into the mitochondrial inner membrane. Also required for the transfer of beta-barrel precursors from the TOM complex to the sorting and assembly machinery (SAM complex) of the outer membrane. Acts as a chaperone-like protein that protects the hydrophobic precursors from aggregation and guide them through the mitochondrial intermembrane space. The TIMM8-TIMM13 complex mediates the import of some proteins while the predominant TIMM9-TIMM10 70 kDa complex mediates the import of much more proteins (By similarity).</text>
</comment>
<comment type="subunit">
    <text evidence="1">Heterohexamer; composed of 3 copies of TIMM8A and 3 copies of TIMM13, named soluble 70 kDa complex. Associates with the TIM22 complex, whose core is composed of TIMM22 (By similarity).</text>
</comment>
<comment type="subcellular location">
    <subcellularLocation>
        <location evidence="1">Mitochondrion inner membrane</location>
        <topology evidence="1">Peripheral membrane protein</topology>
        <orientation evidence="1">Intermembrane side</orientation>
    </subcellularLocation>
</comment>
<comment type="domain">
    <text evidence="1">The twin CX3C motif contains 4 conserved Cys residues that form 2 disulfide bonds in the mitochondrial intermembrane space. However, during the transit of TIMM8A from cytoplasm into mitochondrion, the Cys residues probably coordinate zinc, thereby preventing folding and allowing its transfer across mitochondrial outer membrane (By similarity).</text>
</comment>
<comment type="similarity">
    <text evidence="2">Belongs to the small Tim family.</text>
</comment>
<organism>
    <name type="scientific">Xenopus laevis</name>
    <name type="common">African clawed frog</name>
    <dbReference type="NCBI Taxonomy" id="8355"/>
    <lineage>
        <taxon>Eukaryota</taxon>
        <taxon>Metazoa</taxon>
        <taxon>Chordata</taxon>
        <taxon>Craniata</taxon>
        <taxon>Vertebrata</taxon>
        <taxon>Euteleostomi</taxon>
        <taxon>Amphibia</taxon>
        <taxon>Batrachia</taxon>
        <taxon>Anura</taxon>
        <taxon>Pipoidea</taxon>
        <taxon>Pipidae</taxon>
        <taxon>Xenopodinae</taxon>
        <taxon>Xenopus</taxon>
        <taxon>Xenopus</taxon>
    </lineage>
</organism>